<dbReference type="EMBL" id="CP000713">
    <property type="protein sequence ID" value="ABQ93151.1"/>
    <property type="molecule type" value="Genomic_DNA"/>
</dbReference>
<dbReference type="SMR" id="A5WBW0"/>
<dbReference type="STRING" id="349106.PsycPRwf_0192"/>
<dbReference type="KEGG" id="prw:PsycPRwf_0192"/>
<dbReference type="eggNOG" id="COG0224">
    <property type="taxonomic scope" value="Bacteria"/>
</dbReference>
<dbReference type="HOGENOM" id="CLU_050669_0_1_6"/>
<dbReference type="GO" id="GO:0005886">
    <property type="term" value="C:plasma membrane"/>
    <property type="evidence" value="ECO:0007669"/>
    <property type="project" value="UniProtKB-SubCell"/>
</dbReference>
<dbReference type="GO" id="GO:0045259">
    <property type="term" value="C:proton-transporting ATP synthase complex"/>
    <property type="evidence" value="ECO:0007669"/>
    <property type="project" value="UniProtKB-KW"/>
</dbReference>
<dbReference type="GO" id="GO:0005524">
    <property type="term" value="F:ATP binding"/>
    <property type="evidence" value="ECO:0007669"/>
    <property type="project" value="UniProtKB-UniRule"/>
</dbReference>
<dbReference type="GO" id="GO:0046933">
    <property type="term" value="F:proton-transporting ATP synthase activity, rotational mechanism"/>
    <property type="evidence" value="ECO:0007669"/>
    <property type="project" value="UniProtKB-UniRule"/>
</dbReference>
<dbReference type="GO" id="GO:0042777">
    <property type="term" value="P:proton motive force-driven plasma membrane ATP synthesis"/>
    <property type="evidence" value="ECO:0007669"/>
    <property type="project" value="UniProtKB-UniRule"/>
</dbReference>
<dbReference type="CDD" id="cd12151">
    <property type="entry name" value="F1-ATPase_gamma"/>
    <property type="match status" value="1"/>
</dbReference>
<dbReference type="FunFam" id="1.10.287.80:FF:000005">
    <property type="entry name" value="ATP synthase gamma chain"/>
    <property type="match status" value="1"/>
</dbReference>
<dbReference type="Gene3D" id="3.40.1380.10">
    <property type="match status" value="1"/>
</dbReference>
<dbReference type="Gene3D" id="1.10.287.80">
    <property type="entry name" value="ATP synthase, gamma subunit, helix hairpin domain"/>
    <property type="match status" value="2"/>
</dbReference>
<dbReference type="HAMAP" id="MF_00815">
    <property type="entry name" value="ATP_synth_gamma_bact"/>
    <property type="match status" value="1"/>
</dbReference>
<dbReference type="InterPro" id="IPR035968">
    <property type="entry name" value="ATP_synth_F1_ATPase_gsu"/>
</dbReference>
<dbReference type="InterPro" id="IPR000131">
    <property type="entry name" value="ATP_synth_F1_gsu"/>
</dbReference>
<dbReference type="InterPro" id="IPR023632">
    <property type="entry name" value="ATP_synth_F1_gsu_CS"/>
</dbReference>
<dbReference type="NCBIfam" id="TIGR01146">
    <property type="entry name" value="ATPsyn_F1gamma"/>
    <property type="match status" value="1"/>
</dbReference>
<dbReference type="NCBIfam" id="NF004144">
    <property type="entry name" value="PRK05621.1-1"/>
    <property type="match status" value="1"/>
</dbReference>
<dbReference type="PANTHER" id="PTHR11693">
    <property type="entry name" value="ATP SYNTHASE GAMMA CHAIN"/>
    <property type="match status" value="1"/>
</dbReference>
<dbReference type="PANTHER" id="PTHR11693:SF22">
    <property type="entry name" value="ATP SYNTHASE SUBUNIT GAMMA, MITOCHONDRIAL"/>
    <property type="match status" value="1"/>
</dbReference>
<dbReference type="Pfam" id="PF00231">
    <property type="entry name" value="ATP-synt"/>
    <property type="match status" value="1"/>
</dbReference>
<dbReference type="PRINTS" id="PR00126">
    <property type="entry name" value="ATPASEGAMMA"/>
</dbReference>
<dbReference type="SUPFAM" id="SSF52943">
    <property type="entry name" value="ATP synthase (F1-ATPase), gamma subunit"/>
    <property type="match status" value="1"/>
</dbReference>
<dbReference type="PROSITE" id="PS00153">
    <property type="entry name" value="ATPASE_GAMMA"/>
    <property type="match status" value="1"/>
</dbReference>
<accession>A5WBW0</accession>
<proteinExistence type="inferred from homology"/>
<comment type="function">
    <text evidence="1">Produces ATP from ADP in the presence of a proton gradient across the membrane. The gamma chain is believed to be important in regulating ATPase activity and the flow of protons through the CF(0) complex.</text>
</comment>
<comment type="subunit">
    <text evidence="1">F-type ATPases have 2 components, CF(1) - the catalytic core - and CF(0) - the membrane proton channel. CF(1) has five subunits: alpha(3), beta(3), gamma(1), delta(1), epsilon(1). CF(0) has three main subunits: a, b and c.</text>
</comment>
<comment type="subcellular location">
    <subcellularLocation>
        <location evidence="1">Cell inner membrane</location>
        <topology evidence="1">Peripheral membrane protein</topology>
    </subcellularLocation>
</comment>
<comment type="similarity">
    <text evidence="1">Belongs to the ATPase gamma chain family.</text>
</comment>
<keyword id="KW-0066">ATP synthesis</keyword>
<keyword id="KW-0997">Cell inner membrane</keyword>
<keyword id="KW-1003">Cell membrane</keyword>
<keyword id="KW-0139">CF(1)</keyword>
<keyword id="KW-0375">Hydrogen ion transport</keyword>
<keyword id="KW-0406">Ion transport</keyword>
<keyword id="KW-0472">Membrane</keyword>
<keyword id="KW-0813">Transport</keyword>
<gene>
    <name evidence="1" type="primary">atpG</name>
    <name type="ordered locus">PsycPRwf_0192</name>
</gene>
<reference key="1">
    <citation type="submission" date="2007-05" db="EMBL/GenBank/DDBJ databases">
        <title>Complete sequence of chromosome of Psychrobacter sp. PRwf-1.</title>
        <authorList>
            <consortium name="US DOE Joint Genome Institute"/>
            <person name="Copeland A."/>
            <person name="Lucas S."/>
            <person name="Lapidus A."/>
            <person name="Barry K."/>
            <person name="Detter J.C."/>
            <person name="Glavina del Rio T."/>
            <person name="Hammon N."/>
            <person name="Israni S."/>
            <person name="Dalin E."/>
            <person name="Tice H."/>
            <person name="Pitluck S."/>
            <person name="Chain P."/>
            <person name="Malfatti S."/>
            <person name="Shin M."/>
            <person name="Vergez L."/>
            <person name="Schmutz J."/>
            <person name="Larimer F."/>
            <person name="Land M."/>
            <person name="Hauser L."/>
            <person name="Kyrpides N."/>
            <person name="Kim E."/>
            <person name="Tiedje J."/>
            <person name="Richardson P."/>
        </authorList>
    </citation>
    <scope>NUCLEOTIDE SEQUENCE [LARGE SCALE GENOMIC DNA]</scope>
    <source>
        <strain>PRwf-1</strain>
    </source>
</reference>
<feature type="chain" id="PRO_1000072863" description="ATP synthase gamma chain">
    <location>
        <begin position="1"/>
        <end position="293"/>
    </location>
</feature>
<evidence type="ECO:0000255" key="1">
    <source>
        <dbReference type="HAMAP-Rule" id="MF_00815"/>
    </source>
</evidence>
<name>ATPG_PSYWF</name>
<sequence length="293" mass="32507">MASLKEIRAKVTSIKSTQKITRAMQMVAASKMRRAQERMEVGRPYAESMRRVVSHLVNASSDYKHPYMTNRSVNRVGYILVTSDRGLAGGLNINLFKKLMHHVQEFQNQSVEAEFAVIGSKGVSFFKSFGGKVTSAVTDYGDNPTFEQLNAPVQAMLDDYANGRLDRIYMVYNKFVNAMTQQPIVTQLVPLPDSAIDSADAGINTELSWDYIYEPDVKTLIDGLLNRYIESIVYQAVMENIASEQSARMVAMKAATDNAGDLINDLQLVYNKLRQAAITREISEIVGGAAAVS</sequence>
<protein>
    <recommendedName>
        <fullName evidence="1">ATP synthase gamma chain</fullName>
    </recommendedName>
    <alternativeName>
        <fullName evidence="1">ATP synthase F1 sector gamma subunit</fullName>
    </alternativeName>
    <alternativeName>
        <fullName evidence="1">F-ATPase gamma subunit</fullName>
    </alternativeName>
</protein>
<organism>
    <name type="scientific">Psychrobacter sp. (strain PRwf-1)</name>
    <dbReference type="NCBI Taxonomy" id="349106"/>
    <lineage>
        <taxon>Bacteria</taxon>
        <taxon>Pseudomonadati</taxon>
        <taxon>Pseudomonadota</taxon>
        <taxon>Gammaproteobacteria</taxon>
        <taxon>Moraxellales</taxon>
        <taxon>Moraxellaceae</taxon>
        <taxon>Psychrobacter</taxon>
    </lineage>
</organism>